<evidence type="ECO:0000255" key="1">
    <source>
        <dbReference type="HAMAP-Rule" id="MF_01307"/>
    </source>
</evidence>
<evidence type="ECO:0000305" key="2"/>
<comment type="function">
    <text evidence="1">With S4 and S12 plays an important role in translational accuracy.</text>
</comment>
<comment type="function">
    <text evidence="1">Located at the back of the 30S subunit body where it stabilizes the conformation of the head with respect to the body.</text>
</comment>
<comment type="subunit">
    <text evidence="1">Part of the 30S ribosomal subunit. Contacts proteins S4 and S8.</text>
</comment>
<comment type="domain">
    <text>The N-terminal domain interacts with the head of the 30S subunit; the C-terminal domain interacts with the body and contacts protein S4. The interaction surface between S4 and S5 is involved in control of translational fidelity.</text>
</comment>
<comment type="similarity">
    <text evidence="1">Belongs to the universal ribosomal protein uS5 family.</text>
</comment>
<sequence length="167" mass="17603">MAHIEKQAGELQEKLIAVNRVSKTVKGGRIFSFTALTVVGDGNGRVGFGYGKAREVPAAIQKAMEKARRNMINVALNNGTLQHPVKGVHTGSRVFMQPASEGTGIIAGGAMRAVLEVAGVHNVLAKAYGSTNPINVVRATIDGLENMNSPEMVAAKRGKSVEEILGK</sequence>
<accession>Q57J49</accession>
<gene>
    <name evidence="1" type="primary">rpsE</name>
    <name type="ordered locus">SCH_3357</name>
</gene>
<protein>
    <recommendedName>
        <fullName evidence="1">Small ribosomal subunit protein uS5</fullName>
    </recommendedName>
    <alternativeName>
        <fullName evidence="2">30S ribosomal protein S5</fullName>
    </alternativeName>
</protein>
<keyword id="KW-0687">Ribonucleoprotein</keyword>
<keyword id="KW-0689">Ribosomal protein</keyword>
<keyword id="KW-0694">RNA-binding</keyword>
<keyword id="KW-0699">rRNA-binding</keyword>
<reference key="1">
    <citation type="journal article" date="2005" name="Nucleic Acids Res.">
        <title>The genome sequence of Salmonella enterica serovar Choleraesuis, a highly invasive and resistant zoonotic pathogen.</title>
        <authorList>
            <person name="Chiu C.-H."/>
            <person name="Tang P."/>
            <person name="Chu C."/>
            <person name="Hu S."/>
            <person name="Bao Q."/>
            <person name="Yu J."/>
            <person name="Chou Y.-Y."/>
            <person name="Wang H.-S."/>
            <person name="Lee Y.-S."/>
        </authorList>
    </citation>
    <scope>NUCLEOTIDE SEQUENCE [LARGE SCALE GENOMIC DNA]</scope>
    <source>
        <strain>SC-B67</strain>
    </source>
</reference>
<dbReference type="EMBL" id="AE017220">
    <property type="protein sequence ID" value="AAX67263.1"/>
    <property type="molecule type" value="Genomic_DNA"/>
</dbReference>
<dbReference type="RefSeq" id="WP_000940121.1">
    <property type="nucleotide sequence ID" value="NC_006905.1"/>
</dbReference>
<dbReference type="SMR" id="Q57J49"/>
<dbReference type="GeneID" id="93778684"/>
<dbReference type="KEGG" id="sec:SCH_3357"/>
<dbReference type="HOGENOM" id="CLU_065898_2_2_6"/>
<dbReference type="Proteomes" id="UP000000538">
    <property type="component" value="Chromosome"/>
</dbReference>
<dbReference type="GO" id="GO:0015935">
    <property type="term" value="C:small ribosomal subunit"/>
    <property type="evidence" value="ECO:0007669"/>
    <property type="project" value="InterPro"/>
</dbReference>
<dbReference type="GO" id="GO:0019843">
    <property type="term" value="F:rRNA binding"/>
    <property type="evidence" value="ECO:0007669"/>
    <property type="project" value="UniProtKB-UniRule"/>
</dbReference>
<dbReference type="GO" id="GO:0003735">
    <property type="term" value="F:structural constituent of ribosome"/>
    <property type="evidence" value="ECO:0007669"/>
    <property type="project" value="InterPro"/>
</dbReference>
<dbReference type="GO" id="GO:0006412">
    <property type="term" value="P:translation"/>
    <property type="evidence" value="ECO:0007669"/>
    <property type="project" value="UniProtKB-UniRule"/>
</dbReference>
<dbReference type="FunFam" id="3.30.160.20:FF:000001">
    <property type="entry name" value="30S ribosomal protein S5"/>
    <property type="match status" value="1"/>
</dbReference>
<dbReference type="FunFam" id="3.30.230.10:FF:000002">
    <property type="entry name" value="30S ribosomal protein S5"/>
    <property type="match status" value="1"/>
</dbReference>
<dbReference type="Gene3D" id="3.30.160.20">
    <property type="match status" value="1"/>
</dbReference>
<dbReference type="Gene3D" id="3.30.230.10">
    <property type="match status" value="1"/>
</dbReference>
<dbReference type="HAMAP" id="MF_01307_B">
    <property type="entry name" value="Ribosomal_uS5_B"/>
    <property type="match status" value="1"/>
</dbReference>
<dbReference type="InterPro" id="IPR020568">
    <property type="entry name" value="Ribosomal_Su5_D2-typ_SF"/>
</dbReference>
<dbReference type="InterPro" id="IPR000851">
    <property type="entry name" value="Ribosomal_uS5"/>
</dbReference>
<dbReference type="InterPro" id="IPR005712">
    <property type="entry name" value="Ribosomal_uS5_bac-type"/>
</dbReference>
<dbReference type="InterPro" id="IPR005324">
    <property type="entry name" value="Ribosomal_uS5_C"/>
</dbReference>
<dbReference type="InterPro" id="IPR013810">
    <property type="entry name" value="Ribosomal_uS5_N"/>
</dbReference>
<dbReference type="InterPro" id="IPR018192">
    <property type="entry name" value="Ribosomal_uS5_N_CS"/>
</dbReference>
<dbReference type="InterPro" id="IPR014721">
    <property type="entry name" value="Ribsml_uS5_D2-typ_fold_subgr"/>
</dbReference>
<dbReference type="NCBIfam" id="TIGR01021">
    <property type="entry name" value="rpsE_bact"/>
    <property type="match status" value="1"/>
</dbReference>
<dbReference type="PANTHER" id="PTHR48277">
    <property type="entry name" value="MITOCHONDRIAL RIBOSOMAL PROTEIN S5"/>
    <property type="match status" value="1"/>
</dbReference>
<dbReference type="PANTHER" id="PTHR48277:SF1">
    <property type="entry name" value="MITOCHONDRIAL RIBOSOMAL PROTEIN S5"/>
    <property type="match status" value="1"/>
</dbReference>
<dbReference type="Pfam" id="PF00333">
    <property type="entry name" value="Ribosomal_S5"/>
    <property type="match status" value="1"/>
</dbReference>
<dbReference type="Pfam" id="PF03719">
    <property type="entry name" value="Ribosomal_S5_C"/>
    <property type="match status" value="1"/>
</dbReference>
<dbReference type="SUPFAM" id="SSF54768">
    <property type="entry name" value="dsRNA-binding domain-like"/>
    <property type="match status" value="1"/>
</dbReference>
<dbReference type="SUPFAM" id="SSF54211">
    <property type="entry name" value="Ribosomal protein S5 domain 2-like"/>
    <property type="match status" value="1"/>
</dbReference>
<dbReference type="PROSITE" id="PS00585">
    <property type="entry name" value="RIBOSOMAL_S5"/>
    <property type="match status" value="1"/>
</dbReference>
<dbReference type="PROSITE" id="PS50881">
    <property type="entry name" value="S5_DSRBD"/>
    <property type="match status" value="1"/>
</dbReference>
<proteinExistence type="inferred from homology"/>
<feature type="chain" id="PRO_0000131586" description="Small ribosomal subunit protein uS5">
    <location>
        <begin position="1"/>
        <end position="167"/>
    </location>
</feature>
<feature type="domain" description="S5 DRBM" evidence="1">
    <location>
        <begin position="11"/>
        <end position="74"/>
    </location>
</feature>
<organism>
    <name type="scientific">Salmonella choleraesuis (strain SC-B67)</name>
    <dbReference type="NCBI Taxonomy" id="321314"/>
    <lineage>
        <taxon>Bacteria</taxon>
        <taxon>Pseudomonadati</taxon>
        <taxon>Pseudomonadota</taxon>
        <taxon>Gammaproteobacteria</taxon>
        <taxon>Enterobacterales</taxon>
        <taxon>Enterobacteriaceae</taxon>
        <taxon>Salmonella</taxon>
    </lineage>
</organism>
<name>RS5_SALCH</name>